<accession>A1TLH6</accession>
<dbReference type="EC" id="4.2.1.33" evidence="1"/>
<dbReference type="EMBL" id="CP000512">
    <property type="protein sequence ID" value="ABM31814.1"/>
    <property type="molecule type" value="Genomic_DNA"/>
</dbReference>
<dbReference type="RefSeq" id="WP_011794366.1">
    <property type="nucleotide sequence ID" value="NC_008752.1"/>
</dbReference>
<dbReference type="SMR" id="A1TLH6"/>
<dbReference type="STRING" id="397945.Aave_1223"/>
<dbReference type="GeneID" id="79790884"/>
<dbReference type="KEGG" id="aav:Aave_1223"/>
<dbReference type="eggNOG" id="COG0065">
    <property type="taxonomic scope" value="Bacteria"/>
</dbReference>
<dbReference type="HOGENOM" id="CLU_006714_3_4_4"/>
<dbReference type="OrthoDB" id="9802769at2"/>
<dbReference type="UniPathway" id="UPA00048">
    <property type="reaction ID" value="UER00071"/>
</dbReference>
<dbReference type="Proteomes" id="UP000002596">
    <property type="component" value="Chromosome"/>
</dbReference>
<dbReference type="GO" id="GO:0003861">
    <property type="term" value="F:3-isopropylmalate dehydratase activity"/>
    <property type="evidence" value="ECO:0007669"/>
    <property type="project" value="UniProtKB-UniRule"/>
</dbReference>
<dbReference type="GO" id="GO:0051539">
    <property type="term" value="F:4 iron, 4 sulfur cluster binding"/>
    <property type="evidence" value="ECO:0007669"/>
    <property type="project" value="UniProtKB-KW"/>
</dbReference>
<dbReference type="GO" id="GO:0046872">
    <property type="term" value="F:metal ion binding"/>
    <property type="evidence" value="ECO:0007669"/>
    <property type="project" value="UniProtKB-KW"/>
</dbReference>
<dbReference type="GO" id="GO:0009098">
    <property type="term" value="P:L-leucine biosynthetic process"/>
    <property type="evidence" value="ECO:0007669"/>
    <property type="project" value="UniProtKB-UniRule"/>
</dbReference>
<dbReference type="CDD" id="cd01583">
    <property type="entry name" value="IPMI"/>
    <property type="match status" value="1"/>
</dbReference>
<dbReference type="FunFam" id="3.30.499.10:FF:000007">
    <property type="entry name" value="3-isopropylmalate dehydratase large subunit"/>
    <property type="match status" value="1"/>
</dbReference>
<dbReference type="Gene3D" id="3.30.499.10">
    <property type="entry name" value="Aconitase, domain 3"/>
    <property type="match status" value="2"/>
</dbReference>
<dbReference type="HAMAP" id="MF_01026">
    <property type="entry name" value="LeuC_type1"/>
    <property type="match status" value="1"/>
</dbReference>
<dbReference type="InterPro" id="IPR004430">
    <property type="entry name" value="3-IsopropMal_deHydase_lsu"/>
</dbReference>
<dbReference type="InterPro" id="IPR015931">
    <property type="entry name" value="Acnase/IPM_dHydase_lsu_aba_1/3"/>
</dbReference>
<dbReference type="InterPro" id="IPR001030">
    <property type="entry name" value="Acoase/IPM_deHydtase_lsu_aba"/>
</dbReference>
<dbReference type="InterPro" id="IPR018136">
    <property type="entry name" value="Aconitase_4Fe-4S_BS"/>
</dbReference>
<dbReference type="InterPro" id="IPR036008">
    <property type="entry name" value="Aconitase_4Fe-4S_dom"/>
</dbReference>
<dbReference type="InterPro" id="IPR050067">
    <property type="entry name" value="IPM_dehydratase_rel_enz"/>
</dbReference>
<dbReference type="InterPro" id="IPR033941">
    <property type="entry name" value="IPMI_cat"/>
</dbReference>
<dbReference type="NCBIfam" id="TIGR00170">
    <property type="entry name" value="leuC"/>
    <property type="match status" value="1"/>
</dbReference>
<dbReference type="NCBIfam" id="NF004016">
    <property type="entry name" value="PRK05478.1"/>
    <property type="match status" value="1"/>
</dbReference>
<dbReference type="NCBIfam" id="NF009116">
    <property type="entry name" value="PRK12466.1"/>
    <property type="match status" value="1"/>
</dbReference>
<dbReference type="PANTHER" id="PTHR43822:SF9">
    <property type="entry name" value="3-ISOPROPYLMALATE DEHYDRATASE"/>
    <property type="match status" value="1"/>
</dbReference>
<dbReference type="PANTHER" id="PTHR43822">
    <property type="entry name" value="HOMOACONITASE, MITOCHONDRIAL-RELATED"/>
    <property type="match status" value="1"/>
</dbReference>
<dbReference type="Pfam" id="PF00330">
    <property type="entry name" value="Aconitase"/>
    <property type="match status" value="1"/>
</dbReference>
<dbReference type="PRINTS" id="PR00415">
    <property type="entry name" value="ACONITASE"/>
</dbReference>
<dbReference type="SUPFAM" id="SSF53732">
    <property type="entry name" value="Aconitase iron-sulfur domain"/>
    <property type="match status" value="1"/>
</dbReference>
<dbReference type="PROSITE" id="PS00450">
    <property type="entry name" value="ACONITASE_1"/>
    <property type="match status" value="1"/>
</dbReference>
<dbReference type="PROSITE" id="PS01244">
    <property type="entry name" value="ACONITASE_2"/>
    <property type="match status" value="1"/>
</dbReference>
<organism>
    <name type="scientific">Paracidovorax citrulli (strain AAC00-1)</name>
    <name type="common">Acidovorax citrulli</name>
    <dbReference type="NCBI Taxonomy" id="397945"/>
    <lineage>
        <taxon>Bacteria</taxon>
        <taxon>Pseudomonadati</taxon>
        <taxon>Pseudomonadota</taxon>
        <taxon>Betaproteobacteria</taxon>
        <taxon>Burkholderiales</taxon>
        <taxon>Comamonadaceae</taxon>
        <taxon>Paracidovorax</taxon>
    </lineage>
</organism>
<name>LEUC_PARC0</name>
<keyword id="KW-0004">4Fe-4S</keyword>
<keyword id="KW-0028">Amino-acid biosynthesis</keyword>
<keyword id="KW-0100">Branched-chain amino acid biosynthesis</keyword>
<keyword id="KW-0408">Iron</keyword>
<keyword id="KW-0411">Iron-sulfur</keyword>
<keyword id="KW-0432">Leucine biosynthesis</keyword>
<keyword id="KW-0456">Lyase</keyword>
<keyword id="KW-0479">Metal-binding</keyword>
<feature type="chain" id="PRO_1000063516" description="3-isopropylmalate dehydratase large subunit">
    <location>
        <begin position="1"/>
        <end position="473"/>
    </location>
</feature>
<feature type="binding site" evidence="1">
    <location>
        <position position="351"/>
    </location>
    <ligand>
        <name>[4Fe-4S] cluster</name>
        <dbReference type="ChEBI" id="CHEBI:49883"/>
    </ligand>
</feature>
<feature type="binding site" evidence="1">
    <location>
        <position position="414"/>
    </location>
    <ligand>
        <name>[4Fe-4S] cluster</name>
        <dbReference type="ChEBI" id="CHEBI:49883"/>
    </ligand>
</feature>
<feature type="binding site" evidence="1">
    <location>
        <position position="417"/>
    </location>
    <ligand>
        <name>[4Fe-4S] cluster</name>
        <dbReference type="ChEBI" id="CHEBI:49883"/>
    </ligand>
</feature>
<comment type="function">
    <text evidence="1">Catalyzes the isomerization between 2-isopropylmalate and 3-isopropylmalate, via the formation of 2-isopropylmaleate.</text>
</comment>
<comment type="catalytic activity">
    <reaction evidence="1">
        <text>(2R,3S)-3-isopropylmalate = (2S)-2-isopropylmalate</text>
        <dbReference type="Rhea" id="RHEA:32287"/>
        <dbReference type="ChEBI" id="CHEBI:1178"/>
        <dbReference type="ChEBI" id="CHEBI:35121"/>
        <dbReference type="EC" id="4.2.1.33"/>
    </reaction>
</comment>
<comment type="cofactor">
    <cofactor evidence="1">
        <name>[4Fe-4S] cluster</name>
        <dbReference type="ChEBI" id="CHEBI:49883"/>
    </cofactor>
    <text evidence="1">Binds 1 [4Fe-4S] cluster per subunit.</text>
</comment>
<comment type="pathway">
    <text evidence="1">Amino-acid biosynthesis; L-leucine biosynthesis; L-leucine from 3-methyl-2-oxobutanoate: step 2/4.</text>
</comment>
<comment type="subunit">
    <text evidence="1">Heterodimer of LeuC and LeuD.</text>
</comment>
<comment type="similarity">
    <text evidence="1">Belongs to the aconitase/IPM isomerase family. LeuC type 1 subfamily.</text>
</comment>
<gene>
    <name evidence="1" type="primary">leuC</name>
    <name type="ordered locus">Aave_1223</name>
</gene>
<reference key="1">
    <citation type="submission" date="2006-12" db="EMBL/GenBank/DDBJ databases">
        <title>Complete sequence of Acidovorax avenae subsp. citrulli AAC00-1.</title>
        <authorList>
            <person name="Copeland A."/>
            <person name="Lucas S."/>
            <person name="Lapidus A."/>
            <person name="Barry K."/>
            <person name="Detter J.C."/>
            <person name="Glavina del Rio T."/>
            <person name="Dalin E."/>
            <person name="Tice H."/>
            <person name="Pitluck S."/>
            <person name="Kiss H."/>
            <person name="Brettin T."/>
            <person name="Bruce D."/>
            <person name="Han C."/>
            <person name="Tapia R."/>
            <person name="Gilna P."/>
            <person name="Schmutz J."/>
            <person name="Larimer F."/>
            <person name="Land M."/>
            <person name="Hauser L."/>
            <person name="Kyrpides N."/>
            <person name="Kim E."/>
            <person name="Stahl D."/>
            <person name="Richardson P."/>
        </authorList>
    </citation>
    <scope>NUCLEOTIDE SEQUENCE [LARGE SCALE GENOMIC DNA]</scope>
    <source>
        <strain>AAC00-1</strain>
    </source>
</reference>
<proteinExistence type="inferred from homology"/>
<sequence length="473" mass="50848">MGRTLYDKIWDEHVVHTEEDGTAILYIDRHLVHEVTSPQAFEGIRQAGRKVWRVSSIVATADHNTPTTGWERGYDGIEDPISKEQITTLDKNIAEVGAAAFFPFMSKRQGIVHVIGPENGATLPGMTVVCGDSHTSTHGAFGALAHGIGTSEVEHVMATQTLLAKKAKNMLIRVEGQVAPGVTAKDIVLAIIGKIGTAGGTGYTIEFAGPAIRALSMEGRMTVCNMAIEAGARAGLVAVDDKTIEYVKNRPLSPTGVEWDQAVAYWKTLHSDADAHFDTVVTLNGADIVPQVTWGTSPEMVLGVDASVPDPDKEKDPNKRSAIERALTYMALEPGKPLNDIFVDKVFIGSCTNSRIEDMREAAAVVKKLGRKVARNIKVAMVVPGSGLVKEQAEREGLDQVFKAAGFEWREPGCSMCLAMNADRLEPGERCASTSNRNFEGRQGAGGRTHLVSPAMAAAAAVHGHFVDIRKFA</sequence>
<evidence type="ECO:0000255" key="1">
    <source>
        <dbReference type="HAMAP-Rule" id="MF_01026"/>
    </source>
</evidence>
<protein>
    <recommendedName>
        <fullName evidence="1">3-isopropylmalate dehydratase large subunit</fullName>
        <ecNumber evidence="1">4.2.1.33</ecNumber>
    </recommendedName>
    <alternativeName>
        <fullName evidence="1">Alpha-IPM isomerase</fullName>
        <shortName evidence="1">IPMI</shortName>
    </alternativeName>
    <alternativeName>
        <fullName evidence="1">Isopropylmalate isomerase</fullName>
    </alternativeName>
</protein>